<accession>B2INF5</accession>
<proteinExistence type="inferred from homology"/>
<name>RIMM_STRPS</name>
<evidence type="ECO:0000255" key="1">
    <source>
        <dbReference type="HAMAP-Rule" id="MF_00014"/>
    </source>
</evidence>
<gene>
    <name evidence="1" type="primary">rimM</name>
    <name type="ordered locus">SPCG_0726</name>
</gene>
<dbReference type="EMBL" id="CP001033">
    <property type="protein sequence ID" value="ACB89978.1"/>
    <property type="molecule type" value="Genomic_DNA"/>
</dbReference>
<dbReference type="RefSeq" id="WP_001105899.1">
    <property type="nucleotide sequence ID" value="NC_010582.1"/>
</dbReference>
<dbReference type="SMR" id="B2INF5"/>
<dbReference type="GeneID" id="45653851"/>
<dbReference type="KEGG" id="spw:SPCG_0726"/>
<dbReference type="HOGENOM" id="CLU_077636_3_1_9"/>
<dbReference type="GO" id="GO:0005737">
    <property type="term" value="C:cytoplasm"/>
    <property type="evidence" value="ECO:0007669"/>
    <property type="project" value="UniProtKB-SubCell"/>
</dbReference>
<dbReference type="GO" id="GO:0005840">
    <property type="term" value="C:ribosome"/>
    <property type="evidence" value="ECO:0007669"/>
    <property type="project" value="InterPro"/>
</dbReference>
<dbReference type="GO" id="GO:0043022">
    <property type="term" value="F:ribosome binding"/>
    <property type="evidence" value="ECO:0007669"/>
    <property type="project" value="InterPro"/>
</dbReference>
<dbReference type="GO" id="GO:0042274">
    <property type="term" value="P:ribosomal small subunit biogenesis"/>
    <property type="evidence" value="ECO:0007669"/>
    <property type="project" value="UniProtKB-UniRule"/>
</dbReference>
<dbReference type="GO" id="GO:0006364">
    <property type="term" value="P:rRNA processing"/>
    <property type="evidence" value="ECO:0007669"/>
    <property type="project" value="UniProtKB-UniRule"/>
</dbReference>
<dbReference type="Gene3D" id="2.30.30.240">
    <property type="entry name" value="PRC-barrel domain"/>
    <property type="match status" value="1"/>
</dbReference>
<dbReference type="Gene3D" id="2.40.30.60">
    <property type="entry name" value="RimM"/>
    <property type="match status" value="1"/>
</dbReference>
<dbReference type="HAMAP" id="MF_00014">
    <property type="entry name" value="Ribosome_mat_RimM"/>
    <property type="match status" value="1"/>
</dbReference>
<dbReference type="InterPro" id="IPR027275">
    <property type="entry name" value="PRC-brl_dom"/>
</dbReference>
<dbReference type="InterPro" id="IPR011033">
    <property type="entry name" value="PRC_barrel-like_sf"/>
</dbReference>
<dbReference type="InterPro" id="IPR011961">
    <property type="entry name" value="RimM"/>
</dbReference>
<dbReference type="InterPro" id="IPR002676">
    <property type="entry name" value="RimM_N"/>
</dbReference>
<dbReference type="InterPro" id="IPR036976">
    <property type="entry name" value="RimM_N_sf"/>
</dbReference>
<dbReference type="InterPro" id="IPR009000">
    <property type="entry name" value="Transl_B-barrel_sf"/>
</dbReference>
<dbReference type="NCBIfam" id="TIGR02273">
    <property type="entry name" value="16S_RimM"/>
    <property type="match status" value="1"/>
</dbReference>
<dbReference type="PANTHER" id="PTHR33692">
    <property type="entry name" value="RIBOSOME MATURATION FACTOR RIMM"/>
    <property type="match status" value="1"/>
</dbReference>
<dbReference type="PANTHER" id="PTHR33692:SF1">
    <property type="entry name" value="RIBOSOME MATURATION FACTOR RIMM"/>
    <property type="match status" value="1"/>
</dbReference>
<dbReference type="Pfam" id="PF05239">
    <property type="entry name" value="PRC"/>
    <property type="match status" value="1"/>
</dbReference>
<dbReference type="Pfam" id="PF01782">
    <property type="entry name" value="RimM"/>
    <property type="match status" value="1"/>
</dbReference>
<dbReference type="SUPFAM" id="SSF50346">
    <property type="entry name" value="PRC-barrel domain"/>
    <property type="match status" value="1"/>
</dbReference>
<dbReference type="SUPFAM" id="SSF50447">
    <property type="entry name" value="Translation proteins"/>
    <property type="match status" value="1"/>
</dbReference>
<protein>
    <recommendedName>
        <fullName evidence="1">Ribosome maturation factor RimM</fullName>
    </recommendedName>
</protein>
<reference key="1">
    <citation type="journal article" date="2009" name="BMC Genomics">
        <title>Genome evolution driven by host adaptations results in a more virulent and antimicrobial-resistant Streptococcus pneumoniae serotype 14.</title>
        <authorList>
            <person name="Ding F."/>
            <person name="Tang P."/>
            <person name="Hsu M.-H."/>
            <person name="Cui P."/>
            <person name="Hu S."/>
            <person name="Yu J."/>
            <person name="Chiu C.-H."/>
        </authorList>
    </citation>
    <scope>NUCLEOTIDE SEQUENCE [LARGE SCALE GENOMIC DNA]</scope>
    <source>
        <strain>CGSP14</strain>
    </source>
</reference>
<feature type="chain" id="PRO_1000089527" description="Ribosome maturation factor RimM">
    <location>
        <begin position="1"/>
        <end position="172"/>
    </location>
</feature>
<feature type="domain" description="PRC barrel" evidence="1">
    <location>
        <begin position="95"/>
        <end position="168"/>
    </location>
</feature>
<comment type="function">
    <text evidence="1">An accessory protein needed during the final step in the assembly of 30S ribosomal subunit, possibly for assembly of the head region. Essential for efficient processing of 16S rRNA. May be needed both before and after RbfA during the maturation of 16S rRNA. It has affinity for free ribosomal 30S subunits but not for 70S ribosomes.</text>
</comment>
<comment type="subunit">
    <text evidence="1">Binds ribosomal protein uS19.</text>
</comment>
<comment type="subcellular location">
    <subcellularLocation>
        <location evidence="1">Cytoplasm</location>
    </subcellularLocation>
</comment>
<comment type="domain">
    <text evidence="1">The PRC barrel domain binds ribosomal protein uS19.</text>
</comment>
<comment type="similarity">
    <text evidence="1">Belongs to the RimM family.</text>
</comment>
<sequence>MNYFNVGKIVNTQGLQGEMRVLSVTDFAEERFKKGAELALFDEKDQFVQTVTIASHRKQKNFDIIKFKDMYHINTIEKYKGYSLKVAEEDLNDLDDGEFYYHEIIGLEVYEGDSLVGTIKEILQPGANDVWVVKRKGKRDLLLPYIPPVVLNVDIPNKRVDVEILEGLDDED</sequence>
<keyword id="KW-0143">Chaperone</keyword>
<keyword id="KW-0963">Cytoplasm</keyword>
<keyword id="KW-0690">Ribosome biogenesis</keyword>
<keyword id="KW-0698">rRNA processing</keyword>
<organism>
    <name type="scientific">Streptococcus pneumoniae (strain CGSP14)</name>
    <dbReference type="NCBI Taxonomy" id="516950"/>
    <lineage>
        <taxon>Bacteria</taxon>
        <taxon>Bacillati</taxon>
        <taxon>Bacillota</taxon>
        <taxon>Bacilli</taxon>
        <taxon>Lactobacillales</taxon>
        <taxon>Streptococcaceae</taxon>
        <taxon>Streptococcus</taxon>
    </lineage>
</organism>